<proteinExistence type="inferred from homology"/>
<accession>A0KQJ4</accession>
<feature type="chain" id="PRO_0000330488" description="Siroheme synthase 3">
    <location>
        <begin position="1"/>
        <end position="468"/>
    </location>
</feature>
<feature type="region of interest" description="Precorrin-2 dehydrogenase /sirohydrochlorin ferrochelatase" evidence="1">
    <location>
        <begin position="1"/>
        <end position="204"/>
    </location>
</feature>
<feature type="region of interest" description="Uroporphyrinogen-III C-methyltransferase" evidence="1">
    <location>
        <begin position="216"/>
        <end position="468"/>
    </location>
</feature>
<feature type="active site" description="Proton acceptor" evidence="1">
    <location>
        <position position="248"/>
    </location>
</feature>
<feature type="active site" description="Proton donor" evidence="1">
    <location>
        <position position="270"/>
    </location>
</feature>
<feature type="binding site" evidence="1">
    <location>
        <begin position="22"/>
        <end position="23"/>
    </location>
    <ligand>
        <name>NAD(+)</name>
        <dbReference type="ChEBI" id="CHEBI:57540"/>
    </ligand>
</feature>
<feature type="binding site" evidence="1">
    <location>
        <begin position="43"/>
        <end position="44"/>
    </location>
    <ligand>
        <name>NAD(+)</name>
        <dbReference type="ChEBI" id="CHEBI:57540"/>
    </ligand>
</feature>
<feature type="binding site" evidence="1">
    <location>
        <position position="225"/>
    </location>
    <ligand>
        <name>S-adenosyl-L-methionine</name>
        <dbReference type="ChEBI" id="CHEBI:59789"/>
    </ligand>
</feature>
<feature type="binding site" evidence="1">
    <location>
        <begin position="301"/>
        <end position="303"/>
    </location>
    <ligand>
        <name>S-adenosyl-L-methionine</name>
        <dbReference type="ChEBI" id="CHEBI:59789"/>
    </ligand>
</feature>
<feature type="binding site" evidence="1">
    <location>
        <position position="306"/>
    </location>
    <ligand>
        <name>S-adenosyl-L-methionine</name>
        <dbReference type="ChEBI" id="CHEBI:59789"/>
    </ligand>
</feature>
<feature type="binding site" evidence="1">
    <location>
        <begin position="331"/>
        <end position="332"/>
    </location>
    <ligand>
        <name>S-adenosyl-L-methionine</name>
        <dbReference type="ChEBI" id="CHEBI:59789"/>
    </ligand>
</feature>
<feature type="binding site" evidence="1">
    <location>
        <position position="383"/>
    </location>
    <ligand>
        <name>S-adenosyl-L-methionine</name>
        <dbReference type="ChEBI" id="CHEBI:59789"/>
    </ligand>
</feature>
<feature type="binding site" evidence="1">
    <location>
        <position position="412"/>
    </location>
    <ligand>
        <name>S-adenosyl-L-methionine</name>
        <dbReference type="ChEBI" id="CHEBI:59789"/>
    </ligand>
</feature>
<feature type="modified residue" description="Phosphoserine" evidence="1">
    <location>
        <position position="128"/>
    </location>
</feature>
<sequence length="468" mass="49807">MDYLPIFCRLDNKPVLLVGGGEVAERKARLLLDAGAQLTVVAPELDPELAELAANGSIEWLAGEFAPQQLTGKWLVVAATDRREVNALVYQSANQARIFANVVDDPKRSSFIMPSIIDRSPLMVAISSGGKAPVLARLLREKLEALLPQHLGAVAAFAGSLRERVKARFASMGERRRFWERLLGADRLGQALARGDSASANQLADSLFADESQSGGEVVLVGAGPGDPGLLTLHALRQMQQADVVVYDRLVSDEVMALVRRDARRIFVGKQAGNHCVPQEGINQLLLDEAKKGQRVVRLKGGDPFIFGRGGEELETLVGSGIGFQVVPGITAASGCAAYAGIPLTHRDHAQSVRFVTAHGKGGAQDLDWPLLAKDKQTLVFYMGLSSCTTIREQLLTHGKAGDTPVALIERGTQPSQRVIRGTLAQLPELALGVESPALIMVGSVVTLADQLAWFGQGGAADAALASA</sequence>
<gene>
    <name evidence="1" type="primary">cysG3</name>
    <name type="ordered locus">AHA_4121</name>
</gene>
<protein>
    <recommendedName>
        <fullName evidence="1">Siroheme synthase 3</fullName>
    </recommendedName>
    <domain>
        <recommendedName>
            <fullName evidence="1">Uroporphyrinogen-III C-methyltransferase 3</fullName>
            <shortName evidence="1">Urogen III methylase 3</shortName>
            <ecNumber evidence="1">2.1.1.107</ecNumber>
        </recommendedName>
        <alternativeName>
            <fullName evidence="1">SUMT 3</fullName>
        </alternativeName>
        <alternativeName>
            <fullName evidence="1">Uroporphyrinogen III methylase 3</fullName>
            <shortName evidence="1">UROM 3</shortName>
        </alternativeName>
    </domain>
    <domain>
        <recommendedName>
            <fullName evidence="1">Precorrin-2 dehydrogenase 3</fullName>
            <ecNumber evidence="1">1.3.1.76</ecNumber>
        </recommendedName>
    </domain>
    <domain>
        <recommendedName>
            <fullName evidence="1">Sirohydrochlorin ferrochelatase 3</fullName>
            <ecNumber evidence="1">4.99.1.4</ecNumber>
        </recommendedName>
    </domain>
</protein>
<dbReference type="EC" id="2.1.1.107" evidence="1"/>
<dbReference type="EC" id="1.3.1.76" evidence="1"/>
<dbReference type="EC" id="4.99.1.4" evidence="1"/>
<dbReference type="EMBL" id="CP000462">
    <property type="protein sequence ID" value="ABK37547.1"/>
    <property type="molecule type" value="Genomic_DNA"/>
</dbReference>
<dbReference type="RefSeq" id="WP_011707782.1">
    <property type="nucleotide sequence ID" value="NC_008570.1"/>
</dbReference>
<dbReference type="RefSeq" id="YP_858545.1">
    <property type="nucleotide sequence ID" value="NC_008570.1"/>
</dbReference>
<dbReference type="SMR" id="A0KQJ4"/>
<dbReference type="STRING" id="380703.AHA_4121"/>
<dbReference type="EnsemblBacteria" id="ABK37547">
    <property type="protein sequence ID" value="ABK37547"/>
    <property type="gene ID" value="AHA_4121"/>
</dbReference>
<dbReference type="GeneID" id="4488138"/>
<dbReference type="KEGG" id="aha:AHA_4121"/>
<dbReference type="PATRIC" id="fig|380703.7.peg.4081"/>
<dbReference type="eggNOG" id="COG0007">
    <property type="taxonomic scope" value="Bacteria"/>
</dbReference>
<dbReference type="eggNOG" id="COG1648">
    <property type="taxonomic scope" value="Bacteria"/>
</dbReference>
<dbReference type="HOGENOM" id="CLU_011276_2_0_6"/>
<dbReference type="OrthoDB" id="9815856at2"/>
<dbReference type="UniPathway" id="UPA00148">
    <property type="reaction ID" value="UER00211"/>
</dbReference>
<dbReference type="UniPathway" id="UPA00148">
    <property type="reaction ID" value="UER00222"/>
</dbReference>
<dbReference type="UniPathway" id="UPA00262">
    <property type="reaction ID" value="UER00211"/>
</dbReference>
<dbReference type="UniPathway" id="UPA00262">
    <property type="reaction ID" value="UER00222"/>
</dbReference>
<dbReference type="UniPathway" id="UPA00262">
    <property type="reaction ID" value="UER00376"/>
</dbReference>
<dbReference type="Proteomes" id="UP000000756">
    <property type="component" value="Chromosome"/>
</dbReference>
<dbReference type="GO" id="GO:0051287">
    <property type="term" value="F:NAD binding"/>
    <property type="evidence" value="ECO:0007669"/>
    <property type="project" value="InterPro"/>
</dbReference>
<dbReference type="GO" id="GO:0043115">
    <property type="term" value="F:precorrin-2 dehydrogenase activity"/>
    <property type="evidence" value="ECO:0007669"/>
    <property type="project" value="UniProtKB-UniRule"/>
</dbReference>
<dbReference type="GO" id="GO:0051266">
    <property type="term" value="F:sirohydrochlorin ferrochelatase activity"/>
    <property type="evidence" value="ECO:0007669"/>
    <property type="project" value="UniProtKB-EC"/>
</dbReference>
<dbReference type="GO" id="GO:0004851">
    <property type="term" value="F:uroporphyrin-III C-methyltransferase activity"/>
    <property type="evidence" value="ECO:0007669"/>
    <property type="project" value="UniProtKB-UniRule"/>
</dbReference>
<dbReference type="GO" id="GO:0009236">
    <property type="term" value="P:cobalamin biosynthetic process"/>
    <property type="evidence" value="ECO:0007669"/>
    <property type="project" value="UniProtKB-UniRule"/>
</dbReference>
<dbReference type="GO" id="GO:0032259">
    <property type="term" value="P:methylation"/>
    <property type="evidence" value="ECO:0007669"/>
    <property type="project" value="UniProtKB-KW"/>
</dbReference>
<dbReference type="GO" id="GO:0019354">
    <property type="term" value="P:siroheme biosynthetic process"/>
    <property type="evidence" value="ECO:0007669"/>
    <property type="project" value="UniProtKB-UniRule"/>
</dbReference>
<dbReference type="CDD" id="cd11642">
    <property type="entry name" value="SUMT"/>
    <property type="match status" value="1"/>
</dbReference>
<dbReference type="FunFam" id="3.30.160.110:FF:000001">
    <property type="entry name" value="Siroheme synthase"/>
    <property type="match status" value="1"/>
</dbReference>
<dbReference type="FunFam" id="3.30.950.10:FF:000001">
    <property type="entry name" value="Siroheme synthase"/>
    <property type="match status" value="1"/>
</dbReference>
<dbReference type="FunFam" id="3.40.1010.10:FF:000001">
    <property type="entry name" value="Siroheme synthase"/>
    <property type="match status" value="1"/>
</dbReference>
<dbReference type="Gene3D" id="3.40.1010.10">
    <property type="entry name" value="Cobalt-precorrin-4 Transmethylase, Domain 1"/>
    <property type="match status" value="1"/>
</dbReference>
<dbReference type="Gene3D" id="3.30.950.10">
    <property type="entry name" value="Methyltransferase, Cobalt-precorrin-4 Transmethylase, Domain 2"/>
    <property type="match status" value="1"/>
</dbReference>
<dbReference type="Gene3D" id="3.40.50.720">
    <property type="entry name" value="NAD(P)-binding Rossmann-like Domain"/>
    <property type="match status" value="1"/>
</dbReference>
<dbReference type="Gene3D" id="1.10.8.210">
    <property type="entry name" value="Sirohaem synthase, dimerisation domain"/>
    <property type="match status" value="1"/>
</dbReference>
<dbReference type="Gene3D" id="3.30.160.110">
    <property type="entry name" value="Siroheme synthase, domain 2"/>
    <property type="match status" value="1"/>
</dbReference>
<dbReference type="HAMAP" id="MF_01646">
    <property type="entry name" value="Siroheme_synth"/>
    <property type="match status" value="1"/>
</dbReference>
<dbReference type="InterPro" id="IPR000878">
    <property type="entry name" value="4pyrrol_Mease"/>
</dbReference>
<dbReference type="InterPro" id="IPR035996">
    <property type="entry name" value="4pyrrol_Methylase_sf"/>
</dbReference>
<dbReference type="InterPro" id="IPR014777">
    <property type="entry name" value="4pyrrole_Mease_sub1"/>
</dbReference>
<dbReference type="InterPro" id="IPR014776">
    <property type="entry name" value="4pyrrole_Mease_sub2"/>
</dbReference>
<dbReference type="InterPro" id="IPR006366">
    <property type="entry name" value="CobA/CysG_C"/>
</dbReference>
<dbReference type="InterPro" id="IPR036291">
    <property type="entry name" value="NAD(P)-bd_dom_sf"/>
</dbReference>
<dbReference type="InterPro" id="IPR050161">
    <property type="entry name" value="Siro_Cobalamin_biosynth"/>
</dbReference>
<dbReference type="InterPro" id="IPR037115">
    <property type="entry name" value="Sirohaem_synt_dimer_dom_sf"/>
</dbReference>
<dbReference type="InterPro" id="IPR012409">
    <property type="entry name" value="Sirohaem_synth"/>
</dbReference>
<dbReference type="InterPro" id="IPR028281">
    <property type="entry name" value="Sirohaem_synthase_central"/>
</dbReference>
<dbReference type="InterPro" id="IPR019478">
    <property type="entry name" value="Sirohaem_synthase_dimer_dom"/>
</dbReference>
<dbReference type="InterPro" id="IPR006367">
    <property type="entry name" value="Sirohaem_synthase_N"/>
</dbReference>
<dbReference type="InterPro" id="IPR003043">
    <property type="entry name" value="Uropor_MeTrfase_CS"/>
</dbReference>
<dbReference type="NCBIfam" id="TIGR01469">
    <property type="entry name" value="cobA_cysG_Cterm"/>
    <property type="match status" value="1"/>
</dbReference>
<dbReference type="NCBIfam" id="TIGR01470">
    <property type="entry name" value="cysG_Nterm"/>
    <property type="match status" value="1"/>
</dbReference>
<dbReference type="NCBIfam" id="NF004790">
    <property type="entry name" value="PRK06136.1"/>
    <property type="match status" value="1"/>
</dbReference>
<dbReference type="NCBIfam" id="NF007922">
    <property type="entry name" value="PRK10637.1"/>
    <property type="match status" value="1"/>
</dbReference>
<dbReference type="PANTHER" id="PTHR45790:SF1">
    <property type="entry name" value="SIROHEME SYNTHASE"/>
    <property type="match status" value="1"/>
</dbReference>
<dbReference type="PANTHER" id="PTHR45790">
    <property type="entry name" value="SIROHEME SYNTHASE-RELATED"/>
    <property type="match status" value="1"/>
</dbReference>
<dbReference type="Pfam" id="PF10414">
    <property type="entry name" value="CysG_dimeriser"/>
    <property type="match status" value="1"/>
</dbReference>
<dbReference type="Pfam" id="PF13241">
    <property type="entry name" value="NAD_binding_7"/>
    <property type="match status" value="1"/>
</dbReference>
<dbReference type="Pfam" id="PF14824">
    <property type="entry name" value="Sirohm_synth_M"/>
    <property type="match status" value="1"/>
</dbReference>
<dbReference type="Pfam" id="PF00590">
    <property type="entry name" value="TP_methylase"/>
    <property type="match status" value="1"/>
</dbReference>
<dbReference type="PIRSF" id="PIRSF036426">
    <property type="entry name" value="Sirohaem_synth"/>
    <property type="match status" value="1"/>
</dbReference>
<dbReference type="SUPFAM" id="SSF51735">
    <property type="entry name" value="NAD(P)-binding Rossmann-fold domains"/>
    <property type="match status" value="1"/>
</dbReference>
<dbReference type="SUPFAM" id="SSF75615">
    <property type="entry name" value="Siroheme synthase middle domains-like"/>
    <property type="match status" value="1"/>
</dbReference>
<dbReference type="SUPFAM" id="SSF53790">
    <property type="entry name" value="Tetrapyrrole methylase"/>
    <property type="match status" value="1"/>
</dbReference>
<dbReference type="PROSITE" id="PS00839">
    <property type="entry name" value="SUMT_1"/>
    <property type="match status" value="1"/>
</dbReference>
<dbReference type="PROSITE" id="PS00840">
    <property type="entry name" value="SUMT_2"/>
    <property type="match status" value="1"/>
</dbReference>
<name>CYSG3_AERHH</name>
<evidence type="ECO:0000255" key="1">
    <source>
        <dbReference type="HAMAP-Rule" id="MF_01646"/>
    </source>
</evidence>
<comment type="function">
    <text evidence="1">Multifunctional enzyme that catalyzes the SAM-dependent methylations of uroporphyrinogen III at position C-2 and C-7 to form precorrin-2 via precorrin-1. Then it catalyzes the NAD-dependent ring dehydrogenation of precorrin-2 to yield sirohydrochlorin. Finally, it catalyzes the ferrochelation of sirohydrochlorin to yield siroheme.</text>
</comment>
<comment type="catalytic activity">
    <reaction evidence="1">
        <text>uroporphyrinogen III + 2 S-adenosyl-L-methionine = precorrin-2 + 2 S-adenosyl-L-homocysteine + H(+)</text>
        <dbReference type="Rhea" id="RHEA:32459"/>
        <dbReference type="ChEBI" id="CHEBI:15378"/>
        <dbReference type="ChEBI" id="CHEBI:57308"/>
        <dbReference type="ChEBI" id="CHEBI:57856"/>
        <dbReference type="ChEBI" id="CHEBI:58827"/>
        <dbReference type="ChEBI" id="CHEBI:59789"/>
        <dbReference type="EC" id="2.1.1.107"/>
    </reaction>
</comment>
<comment type="catalytic activity">
    <reaction evidence="1">
        <text>precorrin-2 + NAD(+) = sirohydrochlorin + NADH + 2 H(+)</text>
        <dbReference type="Rhea" id="RHEA:15613"/>
        <dbReference type="ChEBI" id="CHEBI:15378"/>
        <dbReference type="ChEBI" id="CHEBI:57540"/>
        <dbReference type="ChEBI" id="CHEBI:57945"/>
        <dbReference type="ChEBI" id="CHEBI:58351"/>
        <dbReference type="ChEBI" id="CHEBI:58827"/>
        <dbReference type="EC" id="1.3.1.76"/>
    </reaction>
</comment>
<comment type="catalytic activity">
    <reaction evidence="1">
        <text>siroheme + 2 H(+) = sirohydrochlorin + Fe(2+)</text>
        <dbReference type="Rhea" id="RHEA:24360"/>
        <dbReference type="ChEBI" id="CHEBI:15378"/>
        <dbReference type="ChEBI" id="CHEBI:29033"/>
        <dbReference type="ChEBI" id="CHEBI:58351"/>
        <dbReference type="ChEBI" id="CHEBI:60052"/>
        <dbReference type="EC" id="4.99.1.4"/>
    </reaction>
</comment>
<comment type="pathway">
    <text evidence="1">Cofactor biosynthesis; adenosylcobalamin biosynthesis; precorrin-2 from uroporphyrinogen III: step 1/1.</text>
</comment>
<comment type="pathway">
    <text evidence="1">Cofactor biosynthesis; adenosylcobalamin biosynthesis; sirohydrochlorin from precorrin-2: step 1/1.</text>
</comment>
<comment type="pathway">
    <text evidence="1">Porphyrin-containing compound metabolism; siroheme biosynthesis; precorrin-2 from uroporphyrinogen III: step 1/1.</text>
</comment>
<comment type="pathway">
    <text evidence="1">Porphyrin-containing compound metabolism; siroheme biosynthesis; siroheme from sirohydrochlorin: step 1/1.</text>
</comment>
<comment type="pathway">
    <text evidence="1">Porphyrin-containing compound metabolism; siroheme biosynthesis; sirohydrochlorin from precorrin-2: step 1/1.</text>
</comment>
<comment type="similarity">
    <text evidence="1">In the N-terminal section; belongs to the precorrin-2 dehydrogenase / sirohydrochlorin ferrochelatase family.</text>
</comment>
<comment type="similarity">
    <text evidence="1">In the C-terminal section; belongs to the precorrin methyltransferase family.</text>
</comment>
<keyword id="KW-0169">Cobalamin biosynthesis</keyword>
<keyword id="KW-0456">Lyase</keyword>
<keyword id="KW-0489">Methyltransferase</keyword>
<keyword id="KW-0511">Multifunctional enzyme</keyword>
<keyword id="KW-0520">NAD</keyword>
<keyword id="KW-0560">Oxidoreductase</keyword>
<keyword id="KW-0597">Phosphoprotein</keyword>
<keyword id="KW-0627">Porphyrin biosynthesis</keyword>
<keyword id="KW-1185">Reference proteome</keyword>
<keyword id="KW-0949">S-adenosyl-L-methionine</keyword>
<keyword id="KW-0808">Transferase</keyword>
<reference key="1">
    <citation type="journal article" date="2006" name="J. Bacteriol.">
        <title>Genome sequence of Aeromonas hydrophila ATCC 7966T: jack of all trades.</title>
        <authorList>
            <person name="Seshadri R."/>
            <person name="Joseph S.W."/>
            <person name="Chopra A.K."/>
            <person name="Sha J."/>
            <person name="Shaw J."/>
            <person name="Graf J."/>
            <person name="Haft D.H."/>
            <person name="Wu M."/>
            <person name="Ren Q."/>
            <person name="Rosovitz M.J."/>
            <person name="Madupu R."/>
            <person name="Tallon L."/>
            <person name="Kim M."/>
            <person name="Jin S."/>
            <person name="Vuong H."/>
            <person name="Stine O.C."/>
            <person name="Ali A."/>
            <person name="Horneman A.J."/>
            <person name="Heidelberg J.F."/>
        </authorList>
    </citation>
    <scope>NUCLEOTIDE SEQUENCE [LARGE SCALE GENOMIC DNA]</scope>
    <source>
        <strain>ATCC 7966 / DSM 30187 / BCRC 13018 / CCUG 14551 / JCM 1027 / KCTC 2358 / NCIMB 9240 / NCTC 8049</strain>
    </source>
</reference>
<organism>
    <name type="scientific">Aeromonas hydrophila subsp. hydrophila (strain ATCC 7966 / DSM 30187 / BCRC 13018 / CCUG 14551 / JCM 1027 / KCTC 2358 / NCIMB 9240 / NCTC 8049)</name>
    <dbReference type="NCBI Taxonomy" id="380703"/>
    <lineage>
        <taxon>Bacteria</taxon>
        <taxon>Pseudomonadati</taxon>
        <taxon>Pseudomonadota</taxon>
        <taxon>Gammaproteobacteria</taxon>
        <taxon>Aeromonadales</taxon>
        <taxon>Aeromonadaceae</taxon>
        <taxon>Aeromonas</taxon>
    </lineage>
</organism>